<protein>
    <recommendedName>
        <fullName evidence="1">Large ribosomal subunit protein bL36</fullName>
    </recommendedName>
    <alternativeName>
        <fullName evidence="2">50S ribosomal protein L36</fullName>
    </alternativeName>
</protein>
<keyword id="KW-1185">Reference proteome</keyword>
<keyword id="KW-0687">Ribonucleoprotein</keyword>
<keyword id="KW-0689">Ribosomal protein</keyword>
<feature type="chain" id="PRO_1000003405" description="Large ribosomal subunit protein bL36">
    <location>
        <begin position="1"/>
        <end position="37"/>
    </location>
</feature>
<name>RL36_NITSB</name>
<proteinExistence type="inferred from homology"/>
<accession>A6Q1K0</accession>
<dbReference type="EMBL" id="AP009178">
    <property type="protein sequence ID" value="BAF69359.1"/>
    <property type="molecule type" value="Genomic_DNA"/>
</dbReference>
<dbReference type="RefSeq" id="WP_012081622.1">
    <property type="nucleotide sequence ID" value="NC_009662.1"/>
</dbReference>
<dbReference type="SMR" id="A6Q1K0"/>
<dbReference type="FunCoup" id="A6Q1K0">
    <property type="interactions" value="217"/>
</dbReference>
<dbReference type="STRING" id="387092.NIS_0245"/>
<dbReference type="KEGG" id="nis:NIS_0245"/>
<dbReference type="eggNOG" id="COG0257">
    <property type="taxonomic scope" value="Bacteria"/>
</dbReference>
<dbReference type="HOGENOM" id="CLU_135723_6_2_7"/>
<dbReference type="InParanoid" id="A6Q1K0"/>
<dbReference type="OrthoDB" id="9802520at2"/>
<dbReference type="Proteomes" id="UP000001118">
    <property type="component" value="Chromosome"/>
</dbReference>
<dbReference type="GO" id="GO:0005737">
    <property type="term" value="C:cytoplasm"/>
    <property type="evidence" value="ECO:0007669"/>
    <property type="project" value="UniProtKB-ARBA"/>
</dbReference>
<dbReference type="GO" id="GO:1990904">
    <property type="term" value="C:ribonucleoprotein complex"/>
    <property type="evidence" value="ECO:0007669"/>
    <property type="project" value="UniProtKB-KW"/>
</dbReference>
<dbReference type="GO" id="GO:0005840">
    <property type="term" value="C:ribosome"/>
    <property type="evidence" value="ECO:0007669"/>
    <property type="project" value="UniProtKB-KW"/>
</dbReference>
<dbReference type="GO" id="GO:0003735">
    <property type="term" value="F:structural constituent of ribosome"/>
    <property type="evidence" value="ECO:0007669"/>
    <property type="project" value="InterPro"/>
</dbReference>
<dbReference type="GO" id="GO:0006412">
    <property type="term" value="P:translation"/>
    <property type="evidence" value="ECO:0007669"/>
    <property type="project" value="UniProtKB-UniRule"/>
</dbReference>
<dbReference type="HAMAP" id="MF_00251">
    <property type="entry name" value="Ribosomal_bL36"/>
    <property type="match status" value="1"/>
</dbReference>
<dbReference type="InterPro" id="IPR000473">
    <property type="entry name" value="Ribosomal_bL36"/>
</dbReference>
<dbReference type="InterPro" id="IPR035977">
    <property type="entry name" value="Ribosomal_bL36_sp"/>
</dbReference>
<dbReference type="NCBIfam" id="TIGR01022">
    <property type="entry name" value="rpmJ_bact"/>
    <property type="match status" value="1"/>
</dbReference>
<dbReference type="PANTHER" id="PTHR42888">
    <property type="entry name" value="50S RIBOSOMAL PROTEIN L36, CHLOROPLASTIC"/>
    <property type="match status" value="1"/>
</dbReference>
<dbReference type="PANTHER" id="PTHR42888:SF1">
    <property type="entry name" value="LARGE RIBOSOMAL SUBUNIT PROTEIN BL36C"/>
    <property type="match status" value="1"/>
</dbReference>
<dbReference type="Pfam" id="PF00444">
    <property type="entry name" value="Ribosomal_L36"/>
    <property type="match status" value="1"/>
</dbReference>
<dbReference type="SUPFAM" id="SSF57840">
    <property type="entry name" value="Ribosomal protein L36"/>
    <property type="match status" value="1"/>
</dbReference>
<dbReference type="PROSITE" id="PS00828">
    <property type="entry name" value="RIBOSOMAL_L36"/>
    <property type="match status" value="1"/>
</dbReference>
<evidence type="ECO:0000255" key="1">
    <source>
        <dbReference type="HAMAP-Rule" id="MF_00251"/>
    </source>
</evidence>
<evidence type="ECO:0000305" key="2"/>
<organism>
    <name type="scientific">Nitratiruptor sp. (strain SB155-2)</name>
    <dbReference type="NCBI Taxonomy" id="387092"/>
    <lineage>
        <taxon>Bacteria</taxon>
        <taxon>Pseudomonadati</taxon>
        <taxon>Campylobacterota</taxon>
        <taxon>Epsilonproteobacteria</taxon>
        <taxon>Nautiliales</taxon>
        <taxon>Nitratiruptoraceae</taxon>
        <taxon>Nitratiruptor</taxon>
    </lineage>
</organism>
<reference key="1">
    <citation type="journal article" date="2007" name="Proc. Natl. Acad. Sci. U.S.A.">
        <title>Deep-sea vent epsilon-proteobacterial genomes provide insights into emergence of pathogens.</title>
        <authorList>
            <person name="Nakagawa S."/>
            <person name="Takaki Y."/>
            <person name="Shimamura S."/>
            <person name="Reysenbach A.-L."/>
            <person name="Takai K."/>
            <person name="Horikoshi K."/>
        </authorList>
    </citation>
    <scope>NUCLEOTIDE SEQUENCE [LARGE SCALE GENOMIC DNA]</scope>
    <source>
        <strain>SB155-2</strain>
    </source>
</reference>
<comment type="similarity">
    <text evidence="1">Belongs to the bacterial ribosomal protein bL36 family.</text>
</comment>
<sequence>MKVRPSVKKMCEKCKIIKRKGVVRVICVNPKHKQRQG</sequence>
<gene>
    <name evidence="1" type="primary">rpmJ</name>
    <name type="ordered locus">NIS_0245</name>
</gene>